<proteinExistence type="evidence at protein level"/>
<gene>
    <name evidence="2" type="primary">rpsJ</name>
    <name evidence="2" type="synonym">rps10</name>
</gene>
<name>RS10_THETH</name>
<keyword id="KW-0002">3D-structure</keyword>
<keyword id="KW-0687">Ribonucleoprotein</keyword>
<keyword id="KW-0689">Ribosomal protein</keyword>
<comment type="function">
    <text evidence="2">Involved in the binding of tRNA to the ribosomes.</text>
</comment>
<comment type="subunit">
    <text evidence="2">Part of the 30S ribosomal subunit.</text>
</comment>
<comment type="similarity">
    <text evidence="2">Belongs to the universal ribosomal protein uS10 family.</text>
</comment>
<feature type="initiator methionine" description="Removed" evidence="1">
    <location>
        <position position="1"/>
    </location>
</feature>
<feature type="chain" id="PRO_0000146621" description="Small ribosomal subunit protein uS10">
    <location>
        <begin position="2"/>
        <end position="105"/>
    </location>
</feature>
<feature type="strand" evidence="4">
    <location>
        <begin position="4"/>
        <end position="11"/>
    </location>
</feature>
<feature type="helix" evidence="4">
    <location>
        <begin position="13"/>
        <end position="16"/>
    </location>
</feature>
<feature type="turn" evidence="4">
    <location>
        <begin position="18"/>
        <end position="20"/>
    </location>
</feature>
<feature type="strand" evidence="4">
    <location>
        <begin position="21"/>
        <end position="23"/>
    </location>
</feature>
<feature type="helix" evidence="4">
    <location>
        <begin position="24"/>
        <end position="26"/>
    </location>
</feature>
<feature type="strand" evidence="4">
    <location>
        <begin position="28"/>
        <end position="32"/>
    </location>
</feature>
<feature type="strand" evidence="4">
    <location>
        <begin position="46"/>
        <end position="49"/>
    </location>
</feature>
<feature type="strand" evidence="4">
    <location>
        <begin position="51"/>
        <end position="54"/>
    </location>
</feature>
<feature type="strand" evidence="4">
    <location>
        <begin position="61"/>
        <end position="64"/>
    </location>
</feature>
<feature type="strand" evidence="4">
    <location>
        <begin position="71"/>
        <end position="76"/>
    </location>
</feature>
<feature type="turn" evidence="4">
    <location>
        <begin position="79"/>
        <end position="87"/>
    </location>
</feature>
<feature type="strand" evidence="4">
    <location>
        <begin position="92"/>
        <end position="98"/>
    </location>
</feature>
<sequence>MPKIRIKLRGFDHKTLDASAQKIVEAARRSGAQVSGPIPLPTRVRRFTVIRGPFKHKDSREHFELRTHNRLVDIINPNRKTIEQLMTLDLPTGVEIEIKTVGGGR</sequence>
<evidence type="ECO:0000250" key="1"/>
<evidence type="ECO:0000255" key="2">
    <source>
        <dbReference type="HAMAP-Rule" id="MF_00508"/>
    </source>
</evidence>
<evidence type="ECO:0000305" key="3"/>
<evidence type="ECO:0007829" key="4">
    <source>
        <dbReference type="PDB" id="4V8X"/>
    </source>
</evidence>
<accession>P80375</accession>
<protein>
    <recommendedName>
        <fullName evidence="2">Small ribosomal subunit protein uS10</fullName>
    </recommendedName>
    <alternativeName>
        <fullName evidence="3">30S ribosomal protein S10</fullName>
    </alternativeName>
</protein>
<reference key="1">
    <citation type="submission" date="1995-12" db="EMBL/GenBank/DDBJ databases">
        <title>The primary structure of the S10 operon from Thermus thermophilus.</title>
        <authorList>
            <person name="Serganov A.A."/>
            <person name="Avliyakulov N.K."/>
            <person name="Rack A.V."/>
            <person name="Vysotskaya V.S."/>
            <person name="Garber M.B."/>
        </authorList>
    </citation>
    <scope>NUCLEOTIDE SEQUENCE [GENOMIC DNA]</scope>
    <source>
        <strain>VK1</strain>
    </source>
</reference>
<dbReference type="EMBL" id="Z46265">
    <property type="protein sequence ID" value="CAA86407.1"/>
    <property type="molecule type" value="Genomic_DNA"/>
</dbReference>
<dbReference type="RefSeq" id="WP_008633424.1">
    <property type="nucleotide sequence ID" value="NZ_VHHQ01000024.1"/>
</dbReference>
<dbReference type="PDB" id="4V8X">
    <property type="method" value="X-ray"/>
    <property type="resolution" value="3.35 A"/>
    <property type="chains" value="AJ/CJ=1-105"/>
</dbReference>
<dbReference type="PDBsum" id="4V8X"/>
<dbReference type="SMR" id="P80375"/>
<dbReference type="GeneID" id="3167932"/>
<dbReference type="OMA" id="VDIEIKM"/>
<dbReference type="GO" id="GO:1990904">
    <property type="term" value="C:ribonucleoprotein complex"/>
    <property type="evidence" value="ECO:0007669"/>
    <property type="project" value="UniProtKB-KW"/>
</dbReference>
<dbReference type="GO" id="GO:0005840">
    <property type="term" value="C:ribosome"/>
    <property type="evidence" value="ECO:0007669"/>
    <property type="project" value="UniProtKB-KW"/>
</dbReference>
<dbReference type="GO" id="GO:0003735">
    <property type="term" value="F:structural constituent of ribosome"/>
    <property type="evidence" value="ECO:0007669"/>
    <property type="project" value="InterPro"/>
</dbReference>
<dbReference type="GO" id="GO:0000049">
    <property type="term" value="F:tRNA binding"/>
    <property type="evidence" value="ECO:0007669"/>
    <property type="project" value="UniProtKB-UniRule"/>
</dbReference>
<dbReference type="GO" id="GO:0006412">
    <property type="term" value="P:translation"/>
    <property type="evidence" value="ECO:0007669"/>
    <property type="project" value="UniProtKB-UniRule"/>
</dbReference>
<dbReference type="FunFam" id="3.30.70.600:FF:000003">
    <property type="entry name" value="30S ribosomal protein S10"/>
    <property type="match status" value="1"/>
</dbReference>
<dbReference type="Gene3D" id="3.30.70.600">
    <property type="entry name" value="Ribosomal protein S10 domain"/>
    <property type="match status" value="1"/>
</dbReference>
<dbReference type="HAMAP" id="MF_00508">
    <property type="entry name" value="Ribosomal_uS10"/>
    <property type="match status" value="1"/>
</dbReference>
<dbReference type="InterPro" id="IPR001848">
    <property type="entry name" value="Ribosomal_uS10"/>
</dbReference>
<dbReference type="InterPro" id="IPR018268">
    <property type="entry name" value="Ribosomal_uS10_CS"/>
</dbReference>
<dbReference type="InterPro" id="IPR027486">
    <property type="entry name" value="Ribosomal_uS10_dom"/>
</dbReference>
<dbReference type="InterPro" id="IPR036838">
    <property type="entry name" value="Ribosomal_uS10_dom_sf"/>
</dbReference>
<dbReference type="NCBIfam" id="NF001861">
    <property type="entry name" value="PRK00596.1"/>
    <property type="match status" value="1"/>
</dbReference>
<dbReference type="NCBIfam" id="TIGR01049">
    <property type="entry name" value="rpsJ_bact"/>
    <property type="match status" value="1"/>
</dbReference>
<dbReference type="PANTHER" id="PTHR11700">
    <property type="entry name" value="30S RIBOSOMAL PROTEIN S10 FAMILY MEMBER"/>
    <property type="match status" value="1"/>
</dbReference>
<dbReference type="Pfam" id="PF00338">
    <property type="entry name" value="Ribosomal_S10"/>
    <property type="match status" value="1"/>
</dbReference>
<dbReference type="PRINTS" id="PR00971">
    <property type="entry name" value="RIBOSOMALS10"/>
</dbReference>
<dbReference type="SMART" id="SM01403">
    <property type="entry name" value="Ribosomal_S10"/>
    <property type="match status" value="1"/>
</dbReference>
<dbReference type="SUPFAM" id="SSF54999">
    <property type="entry name" value="Ribosomal protein S10"/>
    <property type="match status" value="1"/>
</dbReference>
<dbReference type="PROSITE" id="PS00361">
    <property type="entry name" value="RIBOSOMAL_S10"/>
    <property type="match status" value="1"/>
</dbReference>
<organism>
    <name type="scientific">Thermus thermophilus</name>
    <dbReference type="NCBI Taxonomy" id="274"/>
    <lineage>
        <taxon>Bacteria</taxon>
        <taxon>Thermotogati</taxon>
        <taxon>Deinococcota</taxon>
        <taxon>Deinococci</taxon>
        <taxon>Thermales</taxon>
        <taxon>Thermaceae</taxon>
        <taxon>Thermus</taxon>
    </lineage>
</organism>